<keyword id="KW-0687">Ribonucleoprotein</keyword>
<keyword id="KW-0689">Ribosomal protein</keyword>
<name>RL32_GEOSW</name>
<gene>
    <name evidence="1" type="primary">rpmF</name>
    <name type="ordered locus">GWCH70_1006</name>
</gene>
<proteinExistence type="inferred from homology"/>
<dbReference type="EMBL" id="CP001638">
    <property type="protein sequence ID" value="ACS23866.1"/>
    <property type="molecule type" value="Genomic_DNA"/>
</dbReference>
<dbReference type="SMR" id="C5D8K9"/>
<dbReference type="STRING" id="471223.GWCH70_1006"/>
<dbReference type="KEGG" id="gwc:GWCH70_1006"/>
<dbReference type="eggNOG" id="COG0333">
    <property type="taxonomic scope" value="Bacteria"/>
</dbReference>
<dbReference type="HOGENOM" id="CLU_129084_1_3_9"/>
<dbReference type="OrthoDB" id="9812874at2"/>
<dbReference type="GO" id="GO:0015934">
    <property type="term" value="C:large ribosomal subunit"/>
    <property type="evidence" value="ECO:0007669"/>
    <property type="project" value="InterPro"/>
</dbReference>
<dbReference type="GO" id="GO:0003735">
    <property type="term" value="F:structural constituent of ribosome"/>
    <property type="evidence" value="ECO:0007669"/>
    <property type="project" value="InterPro"/>
</dbReference>
<dbReference type="GO" id="GO:0006412">
    <property type="term" value="P:translation"/>
    <property type="evidence" value="ECO:0007669"/>
    <property type="project" value="UniProtKB-UniRule"/>
</dbReference>
<dbReference type="HAMAP" id="MF_00340">
    <property type="entry name" value="Ribosomal_bL32"/>
    <property type="match status" value="1"/>
</dbReference>
<dbReference type="InterPro" id="IPR002677">
    <property type="entry name" value="Ribosomal_bL32"/>
</dbReference>
<dbReference type="InterPro" id="IPR044957">
    <property type="entry name" value="Ribosomal_bL32_bact"/>
</dbReference>
<dbReference type="InterPro" id="IPR011332">
    <property type="entry name" value="Ribosomal_zn-bd"/>
</dbReference>
<dbReference type="NCBIfam" id="TIGR01031">
    <property type="entry name" value="rpmF_bact"/>
    <property type="match status" value="1"/>
</dbReference>
<dbReference type="PANTHER" id="PTHR35534">
    <property type="entry name" value="50S RIBOSOMAL PROTEIN L32"/>
    <property type="match status" value="1"/>
</dbReference>
<dbReference type="PANTHER" id="PTHR35534:SF2">
    <property type="entry name" value="LARGE RIBOSOMAL SUBUNIT PROTEIN BL32"/>
    <property type="match status" value="1"/>
</dbReference>
<dbReference type="Pfam" id="PF01783">
    <property type="entry name" value="Ribosomal_L32p"/>
    <property type="match status" value="1"/>
</dbReference>
<dbReference type="SUPFAM" id="SSF57829">
    <property type="entry name" value="Zn-binding ribosomal proteins"/>
    <property type="match status" value="1"/>
</dbReference>
<feature type="chain" id="PRO_1000205264" description="Large ribosomal subunit protein bL32">
    <location>
        <begin position="1"/>
        <end position="57"/>
    </location>
</feature>
<organism>
    <name type="scientific">Geobacillus sp. (strain WCH70)</name>
    <dbReference type="NCBI Taxonomy" id="471223"/>
    <lineage>
        <taxon>Bacteria</taxon>
        <taxon>Bacillati</taxon>
        <taxon>Bacillota</taxon>
        <taxon>Bacilli</taxon>
        <taxon>Bacillales</taxon>
        <taxon>Anoxybacillaceae</taxon>
        <taxon>Geobacillus</taxon>
    </lineage>
</organism>
<evidence type="ECO:0000255" key="1">
    <source>
        <dbReference type="HAMAP-Rule" id="MF_00340"/>
    </source>
</evidence>
<evidence type="ECO:0000305" key="2"/>
<protein>
    <recommendedName>
        <fullName evidence="1">Large ribosomal subunit protein bL32</fullName>
    </recommendedName>
    <alternativeName>
        <fullName evidence="2">50S ribosomal protein L32</fullName>
    </alternativeName>
</protein>
<reference key="1">
    <citation type="submission" date="2009-06" db="EMBL/GenBank/DDBJ databases">
        <title>Complete sequence of chromosome of Geopacillus sp. WCH70.</title>
        <authorList>
            <consortium name="US DOE Joint Genome Institute"/>
            <person name="Lucas S."/>
            <person name="Copeland A."/>
            <person name="Lapidus A."/>
            <person name="Glavina del Rio T."/>
            <person name="Dalin E."/>
            <person name="Tice H."/>
            <person name="Bruce D."/>
            <person name="Goodwin L."/>
            <person name="Pitluck S."/>
            <person name="Chertkov O."/>
            <person name="Brettin T."/>
            <person name="Detter J.C."/>
            <person name="Han C."/>
            <person name="Larimer F."/>
            <person name="Land M."/>
            <person name="Hauser L."/>
            <person name="Kyrpides N."/>
            <person name="Mikhailova N."/>
            <person name="Brumm P."/>
            <person name="Mead D.A."/>
            <person name="Richardson P."/>
        </authorList>
    </citation>
    <scope>NUCLEOTIDE SEQUENCE [LARGE SCALE GENOMIC DNA]</scope>
    <source>
        <strain>WCH70</strain>
    </source>
</reference>
<accession>C5D8K9</accession>
<comment type="similarity">
    <text evidence="1">Belongs to the bacterial ribosomal protein bL32 family.</text>
</comment>
<sequence>MAVPFRRTSKTRKRLRRTHFKLQVPGMVECPNCGEMKLAHRVCKSCGTYKGREVVNK</sequence>